<reference key="1">
    <citation type="submission" date="2007-03" db="EMBL/GenBank/DDBJ databases">
        <title>Sequencing analysis of Arabis hirsuta chloroplast DNA.</title>
        <authorList>
            <person name="Hosouchi T."/>
            <person name="Tsuruoka H."/>
            <person name="Kotani H."/>
        </authorList>
    </citation>
    <scope>NUCLEOTIDE SEQUENCE [LARGE SCALE GENOMIC DNA]</scope>
</reference>
<name>NDHH_ARAHI</name>
<organism>
    <name type="scientific">Arabis hirsuta</name>
    <name type="common">Hairy rock-cress</name>
    <name type="synonym">Turritis hirsuta</name>
    <dbReference type="NCBI Taxonomy" id="78191"/>
    <lineage>
        <taxon>Eukaryota</taxon>
        <taxon>Viridiplantae</taxon>
        <taxon>Streptophyta</taxon>
        <taxon>Embryophyta</taxon>
        <taxon>Tracheophyta</taxon>
        <taxon>Spermatophyta</taxon>
        <taxon>Magnoliopsida</taxon>
        <taxon>eudicotyledons</taxon>
        <taxon>Gunneridae</taxon>
        <taxon>Pentapetalae</taxon>
        <taxon>rosids</taxon>
        <taxon>malvids</taxon>
        <taxon>Brassicales</taxon>
        <taxon>Brassicaceae</taxon>
        <taxon>Arabideae</taxon>
        <taxon>Arabis</taxon>
    </lineage>
</organism>
<sequence>MKRPVTGKDLMIVNMGPHHPSMHGVLRLIVTLDGEDVVDCEPILGYLHRGMEKIAENRAIIQYLPYVTRWDYLATMFTEAITVNGPEQLGNIQVPKRASYIRVIMLELSRIASHLLWLGPFMADIGAQTPFFYIFREREFVYDLFEAATGMRMMHNFFRIGGIAADLPYGWIDKCLDFCDYFLTEVIEYQKLITRNPIFLERVEGVGIIGGEEAINWGLSGPMLRASGIPWDLRKVDRYESYDEFEWEIQWQKQGDSLARYLVRLSEMTESIKIIQQALEGLPGGPYENLESRGFDRKRNPEWNDFEYRFISKKPSPTFELSKQELYVRVEAPKGELGIFIIGDQSGFPWRWKIRPPGFINLQILPELVKRMKLADIMTILGSIDIIMGEVDR</sequence>
<dbReference type="EC" id="7.1.1.-" evidence="1"/>
<dbReference type="EMBL" id="AP009369">
    <property type="protein sequence ID" value="BAF50081.1"/>
    <property type="molecule type" value="Genomic_DNA"/>
</dbReference>
<dbReference type="RefSeq" id="YP_001123256.1">
    <property type="nucleotide sequence ID" value="NC_009268.1"/>
</dbReference>
<dbReference type="SMR" id="A4QK76"/>
<dbReference type="GeneID" id="4962593"/>
<dbReference type="GO" id="GO:0009535">
    <property type="term" value="C:chloroplast thylakoid membrane"/>
    <property type="evidence" value="ECO:0007669"/>
    <property type="project" value="UniProtKB-SubCell"/>
</dbReference>
<dbReference type="GO" id="GO:0051287">
    <property type="term" value="F:NAD binding"/>
    <property type="evidence" value="ECO:0007669"/>
    <property type="project" value="InterPro"/>
</dbReference>
<dbReference type="GO" id="GO:0016655">
    <property type="term" value="F:oxidoreductase activity, acting on NAD(P)H, quinone or similar compound as acceptor"/>
    <property type="evidence" value="ECO:0007669"/>
    <property type="project" value="UniProtKB-UniRule"/>
</dbReference>
<dbReference type="GO" id="GO:0048038">
    <property type="term" value="F:quinone binding"/>
    <property type="evidence" value="ECO:0007669"/>
    <property type="project" value="UniProtKB-KW"/>
</dbReference>
<dbReference type="GO" id="GO:0019684">
    <property type="term" value="P:photosynthesis, light reaction"/>
    <property type="evidence" value="ECO:0007669"/>
    <property type="project" value="UniProtKB-UniRule"/>
</dbReference>
<dbReference type="FunFam" id="1.10.645.10:FF:000003">
    <property type="entry name" value="NAD(P)H-quinone oxidoreductase subunit H, chloroplastic"/>
    <property type="match status" value="1"/>
</dbReference>
<dbReference type="Gene3D" id="1.10.645.10">
    <property type="entry name" value="Cytochrome-c3 Hydrogenase, chain B"/>
    <property type="match status" value="1"/>
</dbReference>
<dbReference type="HAMAP" id="MF_01358">
    <property type="entry name" value="NDH1_NuoD"/>
    <property type="match status" value="1"/>
</dbReference>
<dbReference type="InterPro" id="IPR001135">
    <property type="entry name" value="NADH_Q_OxRdtase_suD"/>
</dbReference>
<dbReference type="InterPro" id="IPR014029">
    <property type="entry name" value="NADH_UbQ_OxRdtase_49kDa_CS"/>
</dbReference>
<dbReference type="InterPro" id="IPR022885">
    <property type="entry name" value="NDH1_su_D/H"/>
</dbReference>
<dbReference type="InterPro" id="IPR029014">
    <property type="entry name" value="NiFe-Hase_large"/>
</dbReference>
<dbReference type="NCBIfam" id="NF004739">
    <property type="entry name" value="PRK06075.1"/>
    <property type="match status" value="1"/>
</dbReference>
<dbReference type="NCBIfam" id="NF005649">
    <property type="entry name" value="PRK07415.1"/>
    <property type="match status" value="1"/>
</dbReference>
<dbReference type="PANTHER" id="PTHR11993:SF10">
    <property type="entry name" value="NADH DEHYDROGENASE [UBIQUINONE] IRON-SULFUR PROTEIN 2, MITOCHONDRIAL"/>
    <property type="match status" value="1"/>
</dbReference>
<dbReference type="PANTHER" id="PTHR11993">
    <property type="entry name" value="NADH-UBIQUINONE OXIDOREDUCTASE 49 KDA SUBUNIT"/>
    <property type="match status" value="1"/>
</dbReference>
<dbReference type="Pfam" id="PF00346">
    <property type="entry name" value="Complex1_49kDa"/>
    <property type="match status" value="1"/>
</dbReference>
<dbReference type="SUPFAM" id="SSF56762">
    <property type="entry name" value="HydB/Nqo4-like"/>
    <property type="match status" value="1"/>
</dbReference>
<dbReference type="PROSITE" id="PS00535">
    <property type="entry name" value="COMPLEX1_49K"/>
    <property type="match status" value="1"/>
</dbReference>
<protein>
    <recommendedName>
        <fullName evidence="1">NAD(P)H-quinone oxidoreductase subunit H, chloroplastic</fullName>
        <ecNumber evidence="1">7.1.1.-</ecNumber>
    </recommendedName>
    <alternativeName>
        <fullName>NAD(P)H dehydrogenase subunit H</fullName>
    </alternativeName>
    <alternativeName>
        <fullName evidence="1">NADH-plastoquinone oxidoreductase 49 kDa subunit</fullName>
    </alternativeName>
    <alternativeName>
        <fullName evidence="1">NADH-plastoquinone oxidoreductase subunit H</fullName>
    </alternativeName>
</protein>
<keyword id="KW-0150">Chloroplast</keyword>
<keyword id="KW-0472">Membrane</keyword>
<keyword id="KW-0520">NAD</keyword>
<keyword id="KW-0521">NADP</keyword>
<keyword id="KW-0934">Plastid</keyword>
<keyword id="KW-0618">Plastoquinone</keyword>
<keyword id="KW-0874">Quinone</keyword>
<keyword id="KW-0793">Thylakoid</keyword>
<keyword id="KW-1278">Translocase</keyword>
<keyword id="KW-0813">Transport</keyword>
<evidence type="ECO:0000255" key="1">
    <source>
        <dbReference type="HAMAP-Rule" id="MF_01358"/>
    </source>
</evidence>
<feature type="chain" id="PRO_0000357965" description="NAD(P)H-quinone oxidoreductase subunit H, chloroplastic">
    <location>
        <begin position="1"/>
        <end position="393"/>
    </location>
</feature>
<accession>A4QK76</accession>
<comment type="function">
    <text evidence="1">NDH shuttles electrons from NAD(P)H:plastoquinone, via FMN and iron-sulfur (Fe-S) centers, to quinones in the photosynthetic chain and possibly in a chloroplast respiratory chain. The immediate electron acceptor for the enzyme in this species is believed to be plastoquinone. Couples the redox reaction to proton translocation, and thus conserves the redox energy in a proton gradient.</text>
</comment>
<comment type="catalytic activity">
    <reaction evidence="1">
        <text>a plastoquinone + NADH + (n+1) H(+)(in) = a plastoquinol + NAD(+) + n H(+)(out)</text>
        <dbReference type="Rhea" id="RHEA:42608"/>
        <dbReference type="Rhea" id="RHEA-COMP:9561"/>
        <dbReference type="Rhea" id="RHEA-COMP:9562"/>
        <dbReference type="ChEBI" id="CHEBI:15378"/>
        <dbReference type="ChEBI" id="CHEBI:17757"/>
        <dbReference type="ChEBI" id="CHEBI:57540"/>
        <dbReference type="ChEBI" id="CHEBI:57945"/>
        <dbReference type="ChEBI" id="CHEBI:62192"/>
    </reaction>
</comment>
<comment type="catalytic activity">
    <reaction evidence="1">
        <text>a plastoquinone + NADPH + (n+1) H(+)(in) = a plastoquinol + NADP(+) + n H(+)(out)</text>
        <dbReference type="Rhea" id="RHEA:42612"/>
        <dbReference type="Rhea" id="RHEA-COMP:9561"/>
        <dbReference type="Rhea" id="RHEA-COMP:9562"/>
        <dbReference type="ChEBI" id="CHEBI:15378"/>
        <dbReference type="ChEBI" id="CHEBI:17757"/>
        <dbReference type="ChEBI" id="CHEBI:57783"/>
        <dbReference type="ChEBI" id="CHEBI:58349"/>
        <dbReference type="ChEBI" id="CHEBI:62192"/>
    </reaction>
</comment>
<comment type="subunit">
    <text evidence="1">NDH is composed of at least 16 different subunits, 5 of which are encoded in the nucleus.</text>
</comment>
<comment type="subcellular location">
    <subcellularLocation>
        <location evidence="1">Plastid</location>
        <location evidence="1">Chloroplast thylakoid membrane</location>
        <topology evidence="1">Peripheral membrane protein</topology>
        <orientation evidence="1">Stromal side</orientation>
    </subcellularLocation>
</comment>
<comment type="similarity">
    <text evidence="1">Belongs to the complex I 49 kDa subunit family.</text>
</comment>
<geneLocation type="chloroplast"/>
<proteinExistence type="inferred from homology"/>
<gene>
    <name evidence="1" type="primary">ndhH</name>
</gene>